<gene>
    <name evidence="1" type="primary">pyrC</name>
    <name type="ordered locus">NE0727</name>
</gene>
<feature type="chain" id="PRO_0000325574" description="Dihydroorotase">
    <location>
        <begin position="1"/>
        <end position="349"/>
    </location>
</feature>
<feature type="active site" evidence="1">
    <location>
        <position position="253"/>
    </location>
</feature>
<feature type="binding site" evidence="1">
    <location>
        <position position="17"/>
    </location>
    <ligand>
        <name>Zn(2+)</name>
        <dbReference type="ChEBI" id="CHEBI:29105"/>
        <label>1</label>
    </ligand>
</feature>
<feature type="binding site" evidence="1">
    <location>
        <begin position="19"/>
        <end position="21"/>
    </location>
    <ligand>
        <name>substrate</name>
    </ligand>
</feature>
<feature type="binding site" evidence="1">
    <location>
        <position position="19"/>
    </location>
    <ligand>
        <name>Zn(2+)</name>
        <dbReference type="ChEBI" id="CHEBI:29105"/>
        <label>1</label>
    </ligand>
</feature>
<feature type="binding site" evidence="1">
    <location>
        <position position="45"/>
    </location>
    <ligand>
        <name>substrate</name>
    </ligand>
</feature>
<feature type="binding site" description="via carbamate group" evidence="1">
    <location>
        <position position="105"/>
    </location>
    <ligand>
        <name>Zn(2+)</name>
        <dbReference type="ChEBI" id="CHEBI:29105"/>
        <label>1</label>
    </ligand>
</feature>
<feature type="binding site" description="via carbamate group" evidence="1">
    <location>
        <position position="105"/>
    </location>
    <ligand>
        <name>Zn(2+)</name>
        <dbReference type="ChEBI" id="CHEBI:29105"/>
        <label>2</label>
    </ligand>
</feature>
<feature type="binding site" evidence="1">
    <location>
        <position position="142"/>
    </location>
    <ligand>
        <name>substrate</name>
    </ligand>
</feature>
<feature type="binding site" evidence="1">
    <location>
        <position position="142"/>
    </location>
    <ligand>
        <name>Zn(2+)</name>
        <dbReference type="ChEBI" id="CHEBI:29105"/>
        <label>2</label>
    </ligand>
</feature>
<feature type="binding site" evidence="1">
    <location>
        <position position="180"/>
    </location>
    <ligand>
        <name>Zn(2+)</name>
        <dbReference type="ChEBI" id="CHEBI:29105"/>
        <label>2</label>
    </ligand>
</feature>
<feature type="binding site" evidence="1">
    <location>
        <position position="225"/>
    </location>
    <ligand>
        <name>substrate</name>
    </ligand>
</feature>
<feature type="binding site" evidence="1">
    <location>
        <position position="253"/>
    </location>
    <ligand>
        <name>Zn(2+)</name>
        <dbReference type="ChEBI" id="CHEBI:29105"/>
        <label>1</label>
    </ligand>
</feature>
<feature type="binding site" evidence="1">
    <location>
        <position position="257"/>
    </location>
    <ligand>
        <name>substrate</name>
    </ligand>
</feature>
<feature type="binding site" evidence="1">
    <location>
        <position position="269"/>
    </location>
    <ligand>
        <name>substrate</name>
    </ligand>
</feature>
<feature type="modified residue" description="N6-carboxylysine" evidence="1">
    <location>
        <position position="105"/>
    </location>
</feature>
<reference key="1">
    <citation type="journal article" date="2003" name="J. Bacteriol.">
        <title>Complete genome sequence of the ammonia-oxidizing bacterium and obligate chemolithoautotroph Nitrosomonas europaea.</title>
        <authorList>
            <person name="Chain P."/>
            <person name="Lamerdin J.E."/>
            <person name="Larimer F.W."/>
            <person name="Regala W."/>
            <person name="Lao V."/>
            <person name="Land M.L."/>
            <person name="Hauser L."/>
            <person name="Hooper A.B."/>
            <person name="Klotz M.G."/>
            <person name="Norton J."/>
            <person name="Sayavedra-Soto L.A."/>
            <person name="Arciero D.M."/>
            <person name="Hommes N.G."/>
            <person name="Whittaker M.M."/>
            <person name="Arp D.J."/>
        </authorList>
    </citation>
    <scope>NUCLEOTIDE SEQUENCE [LARGE SCALE GENOMIC DNA]</scope>
    <source>
        <strain>ATCC 19718 / CIP 103999 / KCTC 2705 / NBRC 14298</strain>
    </source>
</reference>
<accession>Q82WF3</accession>
<organism>
    <name type="scientific">Nitrosomonas europaea (strain ATCC 19718 / CIP 103999 / KCTC 2705 / NBRC 14298)</name>
    <dbReference type="NCBI Taxonomy" id="228410"/>
    <lineage>
        <taxon>Bacteria</taxon>
        <taxon>Pseudomonadati</taxon>
        <taxon>Pseudomonadota</taxon>
        <taxon>Betaproteobacteria</taxon>
        <taxon>Nitrosomonadales</taxon>
        <taxon>Nitrosomonadaceae</taxon>
        <taxon>Nitrosomonas</taxon>
    </lineage>
</organism>
<comment type="function">
    <text evidence="1">Catalyzes the reversible cyclization of carbamoyl aspartate to dihydroorotate.</text>
</comment>
<comment type="catalytic activity">
    <reaction evidence="1">
        <text>(S)-dihydroorotate + H2O = N-carbamoyl-L-aspartate + H(+)</text>
        <dbReference type="Rhea" id="RHEA:24296"/>
        <dbReference type="ChEBI" id="CHEBI:15377"/>
        <dbReference type="ChEBI" id="CHEBI:15378"/>
        <dbReference type="ChEBI" id="CHEBI:30864"/>
        <dbReference type="ChEBI" id="CHEBI:32814"/>
        <dbReference type="EC" id="3.5.2.3"/>
    </reaction>
</comment>
<comment type="cofactor">
    <cofactor evidence="1">
        <name>Zn(2+)</name>
        <dbReference type="ChEBI" id="CHEBI:29105"/>
    </cofactor>
    <text evidence="1">Binds 2 Zn(2+) ions per subunit.</text>
</comment>
<comment type="pathway">
    <text evidence="1">Pyrimidine metabolism; UMP biosynthesis via de novo pathway; (S)-dihydroorotate from bicarbonate: step 3/3.</text>
</comment>
<comment type="subunit">
    <text evidence="1">Homodimer.</text>
</comment>
<comment type="similarity">
    <text evidence="1">Belongs to the metallo-dependent hydrolases superfamily. DHOase family. Class II DHOase subfamily.</text>
</comment>
<sequence length="349" mass="39084">MNDTADKLTFTRPDDWHLHLRDGNAMRSVLPDTARRFARAIIMPNLKPPIVTTEQAAAYRVRILSALPAELAGRFEPLMTLYLTDTTSPEEITRAQASGIVQGIKLYPAGATTHSDAGVTDIARCEATLEKMEELDMPLLVHGEVVDPAVDVFDREKIFIDRVLTPLLQRFPGLRVVFEHITTREAVEFVQTAPNRIAATITAHHLMLNRNALFTGGLRPHHYCLPVLKREIHRQALLEAATSGHSRFFLGTDSAPHPVRDKESACGCAGIYSAHAAIEFYAEVFEQAGRLDRLEAFTSFHGPDFYGLPRNTDRISLIRESWQIPEQVELGEEKLIPLRAGEHARWKLA</sequence>
<protein>
    <recommendedName>
        <fullName evidence="1">Dihydroorotase</fullName>
        <shortName evidence="1">DHOase</shortName>
        <ecNumber evidence="1">3.5.2.3</ecNumber>
    </recommendedName>
</protein>
<dbReference type="EC" id="3.5.2.3" evidence="1"/>
<dbReference type="EMBL" id="AL954747">
    <property type="protein sequence ID" value="CAD84638.1"/>
    <property type="molecule type" value="Genomic_DNA"/>
</dbReference>
<dbReference type="RefSeq" id="WP_011111345.1">
    <property type="nucleotide sequence ID" value="NC_004757.1"/>
</dbReference>
<dbReference type="SMR" id="Q82WF3"/>
<dbReference type="STRING" id="228410.NE0727"/>
<dbReference type="GeneID" id="87103920"/>
<dbReference type="KEGG" id="neu:NE0727"/>
<dbReference type="eggNOG" id="COG0418">
    <property type="taxonomic scope" value="Bacteria"/>
</dbReference>
<dbReference type="HOGENOM" id="CLU_041558_1_0_4"/>
<dbReference type="OrthoDB" id="9808095at2"/>
<dbReference type="PhylomeDB" id="Q82WF3"/>
<dbReference type="UniPathway" id="UPA00070">
    <property type="reaction ID" value="UER00117"/>
</dbReference>
<dbReference type="Proteomes" id="UP000001416">
    <property type="component" value="Chromosome"/>
</dbReference>
<dbReference type="GO" id="GO:0005829">
    <property type="term" value="C:cytosol"/>
    <property type="evidence" value="ECO:0007669"/>
    <property type="project" value="TreeGrafter"/>
</dbReference>
<dbReference type="GO" id="GO:0004151">
    <property type="term" value="F:dihydroorotase activity"/>
    <property type="evidence" value="ECO:0007669"/>
    <property type="project" value="UniProtKB-UniRule"/>
</dbReference>
<dbReference type="GO" id="GO:0008270">
    <property type="term" value="F:zinc ion binding"/>
    <property type="evidence" value="ECO:0007669"/>
    <property type="project" value="UniProtKB-UniRule"/>
</dbReference>
<dbReference type="GO" id="GO:0006207">
    <property type="term" value="P:'de novo' pyrimidine nucleobase biosynthetic process"/>
    <property type="evidence" value="ECO:0007669"/>
    <property type="project" value="TreeGrafter"/>
</dbReference>
<dbReference type="GO" id="GO:0044205">
    <property type="term" value="P:'de novo' UMP biosynthetic process"/>
    <property type="evidence" value="ECO:0007669"/>
    <property type="project" value="UniProtKB-UniRule"/>
</dbReference>
<dbReference type="CDD" id="cd01294">
    <property type="entry name" value="DHOase"/>
    <property type="match status" value="1"/>
</dbReference>
<dbReference type="FunFam" id="3.20.20.140:FF:000006">
    <property type="entry name" value="Dihydroorotase"/>
    <property type="match status" value="1"/>
</dbReference>
<dbReference type="Gene3D" id="3.20.20.140">
    <property type="entry name" value="Metal-dependent hydrolases"/>
    <property type="match status" value="1"/>
</dbReference>
<dbReference type="HAMAP" id="MF_00219">
    <property type="entry name" value="PyrC_classII"/>
    <property type="match status" value="1"/>
</dbReference>
<dbReference type="InterPro" id="IPR006680">
    <property type="entry name" value="Amidohydro-rel"/>
</dbReference>
<dbReference type="InterPro" id="IPR004721">
    <property type="entry name" value="DHOdimr"/>
</dbReference>
<dbReference type="InterPro" id="IPR002195">
    <property type="entry name" value="Dihydroorotase_CS"/>
</dbReference>
<dbReference type="InterPro" id="IPR032466">
    <property type="entry name" value="Metal_Hydrolase"/>
</dbReference>
<dbReference type="NCBIfam" id="TIGR00856">
    <property type="entry name" value="pyrC_dimer"/>
    <property type="match status" value="1"/>
</dbReference>
<dbReference type="PANTHER" id="PTHR43137">
    <property type="entry name" value="DIHYDROOROTASE"/>
    <property type="match status" value="1"/>
</dbReference>
<dbReference type="PANTHER" id="PTHR43137:SF1">
    <property type="entry name" value="DIHYDROOROTASE"/>
    <property type="match status" value="1"/>
</dbReference>
<dbReference type="Pfam" id="PF01979">
    <property type="entry name" value="Amidohydro_1"/>
    <property type="match status" value="1"/>
</dbReference>
<dbReference type="PIRSF" id="PIRSF001237">
    <property type="entry name" value="DHOdimr"/>
    <property type="match status" value="1"/>
</dbReference>
<dbReference type="SUPFAM" id="SSF51556">
    <property type="entry name" value="Metallo-dependent hydrolases"/>
    <property type="match status" value="1"/>
</dbReference>
<dbReference type="PROSITE" id="PS00482">
    <property type="entry name" value="DIHYDROOROTASE_1"/>
    <property type="match status" value="1"/>
</dbReference>
<dbReference type="PROSITE" id="PS00483">
    <property type="entry name" value="DIHYDROOROTASE_2"/>
    <property type="match status" value="1"/>
</dbReference>
<evidence type="ECO:0000255" key="1">
    <source>
        <dbReference type="HAMAP-Rule" id="MF_00219"/>
    </source>
</evidence>
<keyword id="KW-0378">Hydrolase</keyword>
<keyword id="KW-0479">Metal-binding</keyword>
<keyword id="KW-0665">Pyrimidine biosynthesis</keyword>
<keyword id="KW-1185">Reference proteome</keyword>
<keyword id="KW-0862">Zinc</keyword>
<proteinExistence type="inferred from homology"/>
<name>PYRC_NITEU</name>